<comment type="interaction">
    <interactant intactId="EBI-8827490">
        <id>A6NCC3</id>
    </interactant>
    <interactant intactId="EBI-8826747">
        <id>PRO_0000308465</id>
        <dbReference type="UniProtKB" id="P29991"/>
    </interactant>
    <organismsDiffer>true</organismsDiffer>
    <experiments>3</experiments>
</comment>
<comment type="alternative products">
    <event type="alternative splicing"/>
    <isoform>
        <id>A6NCC3-2</id>
        <name>1</name>
        <sequence type="displayed"/>
    </isoform>
    <isoform>
        <id>A6NCC3-1</id>
        <name>2</name>
        <sequence type="described" ref="VSP_044760 VSP_044761 VSP_044762"/>
    </isoform>
</comment>
<comment type="similarity">
    <text evidence="3">Belongs to the GOLGA6 family.</text>
</comment>
<dbReference type="EMBL" id="AC123768">
    <property type="status" value="NOT_ANNOTATED_CDS"/>
    <property type="molecule type" value="Genomic_DNA"/>
</dbReference>
<dbReference type="EMBL" id="AC135983">
    <property type="status" value="NOT_ANNOTATED_CDS"/>
    <property type="molecule type" value="Genomic_DNA"/>
</dbReference>
<dbReference type="CCDS" id="CCDS59252.1">
    <molecule id="A6NCC3-2"/>
</dbReference>
<dbReference type="RefSeq" id="NP_001264237.1">
    <molecule id="A6NCC3-2"/>
    <property type="nucleotide sequence ID" value="NM_001277308.1"/>
</dbReference>
<dbReference type="SMR" id="A6NCC3"/>
<dbReference type="BioGRID" id="608483">
    <property type="interactions" value="5"/>
</dbReference>
<dbReference type="DIP" id="DIP-58933N"/>
<dbReference type="FunCoup" id="A6NCC3">
    <property type="interactions" value="17"/>
</dbReference>
<dbReference type="IntAct" id="A6NCC3">
    <property type="interactions" value="1"/>
</dbReference>
<dbReference type="STRING" id="9606.ENSP00000423159"/>
<dbReference type="GlyGen" id="A6NCC3">
    <property type="glycosylation" value="1 site"/>
</dbReference>
<dbReference type="iPTMnet" id="A6NCC3"/>
<dbReference type="PhosphoSitePlus" id="A6NCC3"/>
<dbReference type="BioMuta" id="GOLGA8O"/>
<dbReference type="jPOST" id="A6NCC3"/>
<dbReference type="MassIVE" id="A6NCC3"/>
<dbReference type="PaxDb" id="9606-ENSP00000423159"/>
<dbReference type="PeptideAtlas" id="A6NCC3"/>
<dbReference type="Antibodypedia" id="73751">
    <property type="antibodies" value="18 antibodies from 2 providers"/>
</dbReference>
<dbReference type="DNASU" id="728047"/>
<dbReference type="Ensembl" id="ENST00000509311.7">
    <molecule id="A6NCC3-2"/>
    <property type="protein sequence ID" value="ENSP00000423159.2"/>
    <property type="gene ID" value="ENSG00000206127.11"/>
</dbReference>
<dbReference type="GeneID" id="728047"/>
<dbReference type="KEGG" id="hsa:728047"/>
<dbReference type="MANE-Select" id="ENST00000509311.7">
    <property type="protein sequence ID" value="ENSP00000423159.2"/>
    <property type="RefSeq nucleotide sequence ID" value="NM_001277308.1"/>
    <property type="RefSeq protein sequence ID" value="NP_001264237.1"/>
</dbReference>
<dbReference type="UCSC" id="uc031qrg.2">
    <molecule id="A6NCC3-2"/>
    <property type="organism name" value="human"/>
</dbReference>
<dbReference type="AGR" id="HGNC:44406"/>
<dbReference type="CTD" id="728047"/>
<dbReference type="GeneCards" id="GOLGA8O"/>
<dbReference type="HGNC" id="HGNC:44406">
    <property type="gene designation" value="GOLGA8O"/>
</dbReference>
<dbReference type="HPA" id="ENSG00000206127">
    <property type="expression patterns" value="Group enriched (bone marrow, epididymis, testis, thyroid gland)"/>
</dbReference>
<dbReference type="neXtProt" id="NX_A6NCC3"/>
<dbReference type="VEuPathDB" id="HostDB:ENSG00000206127"/>
<dbReference type="eggNOG" id="KOG4725">
    <property type="taxonomic scope" value="Eukaryota"/>
</dbReference>
<dbReference type="GeneTree" id="ENSGT00530000062932"/>
<dbReference type="HOGENOM" id="CLU_012403_1_2_1"/>
<dbReference type="InParanoid" id="A6NCC3"/>
<dbReference type="OrthoDB" id="9837597at2759"/>
<dbReference type="PAN-GO" id="A6NCC3">
    <property type="GO annotations" value="4 GO annotations based on evolutionary models"/>
</dbReference>
<dbReference type="PhylomeDB" id="A6NCC3"/>
<dbReference type="PathwayCommons" id="A6NCC3"/>
<dbReference type="SignaLink" id="A6NCC3"/>
<dbReference type="BioGRID-ORCS" id="728047">
    <property type="hits" value="35 hits in 627 CRISPR screens"/>
</dbReference>
<dbReference type="GenomeRNAi" id="728047"/>
<dbReference type="Pharos" id="A6NCC3">
    <property type="development level" value="Tdark"/>
</dbReference>
<dbReference type="PRO" id="PR:A6NCC3"/>
<dbReference type="Proteomes" id="UP000005640">
    <property type="component" value="Chromosome 15"/>
</dbReference>
<dbReference type="RNAct" id="A6NCC3">
    <property type="molecule type" value="protein"/>
</dbReference>
<dbReference type="Bgee" id="ENSG00000206127">
    <property type="expression patterns" value="Expressed in right lobe of thyroid gland and 95 other cell types or tissues"/>
</dbReference>
<dbReference type="ExpressionAtlas" id="A6NCC3">
    <property type="expression patterns" value="baseline and differential"/>
</dbReference>
<dbReference type="GO" id="GO:0005801">
    <property type="term" value="C:cis-Golgi network"/>
    <property type="evidence" value="ECO:0000318"/>
    <property type="project" value="GO_Central"/>
</dbReference>
<dbReference type="GO" id="GO:0000137">
    <property type="term" value="C:Golgi cis cisterna"/>
    <property type="evidence" value="ECO:0000318"/>
    <property type="project" value="GO_Central"/>
</dbReference>
<dbReference type="GO" id="GO:0032580">
    <property type="term" value="C:Golgi cisterna membrane"/>
    <property type="evidence" value="ECO:0000318"/>
    <property type="project" value="GO_Central"/>
</dbReference>
<dbReference type="GO" id="GO:0007030">
    <property type="term" value="P:Golgi organization"/>
    <property type="evidence" value="ECO:0000318"/>
    <property type="project" value="GO_Central"/>
</dbReference>
<dbReference type="InterPro" id="IPR043937">
    <property type="entry name" value="GM130_C"/>
</dbReference>
<dbReference type="InterPro" id="IPR043976">
    <property type="entry name" value="GOLGA_cons_dom"/>
</dbReference>
<dbReference type="InterPro" id="IPR024858">
    <property type="entry name" value="Golgin_A"/>
</dbReference>
<dbReference type="PANTHER" id="PTHR10881:SF62">
    <property type="entry name" value="GOLGIN SUBFAMILY A MEMBER 8H-RELATED"/>
    <property type="match status" value="1"/>
</dbReference>
<dbReference type="PANTHER" id="PTHR10881">
    <property type="entry name" value="GOLGIN SUBFAMILY A MEMBER-RELATED"/>
    <property type="match status" value="1"/>
</dbReference>
<dbReference type="Pfam" id="PF19046">
    <property type="entry name" value="GM130_C"/>
    <property type="match status" value="1"/>
</dbReference>
<dbReference type="Pfam" id="PF15070">
    <property type="entry name" value="GOLGA2L5"/>
    <property type="match status" value="2"/>
</dbReference>
<organism>
    <name type="scientific">Homo sapiens</name>
    <name type="common">Human</name>
    <dbReference type="NCBI Taxonomy" id="9606"/>
    <lineage>
        <taxon>Eukaryota</taxon>
        <taxon>Metazoa</taxon>
        <taxon>Chordata</taxon>
        <taxon>Craniata</taxon>
        <taxon>Vertebrata</taxon>
        <taxon>Euteleostomi</taxon>
        <taxon>Mammalia</taxon>
        <taxon>Eutheria</taxon>
        <taxon>Euarchontoglires</taxon>
        <taxon>Primates</taxon>
        <taxon>Haplorrhini</taxon>
        <taxon>Catarrhini</taxon>
        <taxon>Hominidae</taxon>
        <taxon>Homo</taxon>
    </lineage>
</organism>
<proteinExistence type="evidence at protein level"/>
<protein>
    <recommendedName>
        <fullName>Golgin subfamily A member 8O</fullName>
    </recommendedName>
</protein>
<name>GOG8O_HUMAN</name>
<feature type="chain" id="PRO_0000342409" description="Golgin subfamily A member 8O">
    <location>
        <begin position="1"/>
        <end position="632"/>
    </location>
</feature>
<feature type="region of interest" description="Disordered" evidence="2">
    <location>
        <begin position="1"/>
        <end position="76"/>
    </location>
</feature>
<feature type="region of interest" description="Disordered" evidence="2">
    <location>
        <begin position="423"/>
        <end position="452"/>
    </location>
</feature>
<feature type="region of interest" description="Disordered" evidence="2">
    <location>
        <begin position="505"/>
        <end position="524"/>
    </location>
</feature>
<feature type="region of interest" description="Disordered" evidence="2">
    <location>
        <begin position="552"/>
        <end position="612"/>
    </location>
</feature>
<feature type="coiled-coil region" evidence="1">
    <location>
        <begin position="85"/>
        <end position="150"/>
    </location>
</feature>
<feature type="coiled-coil region" evidence="1">
    <location>
        <begin position="209"/>
        <end position="421"/>
    </location>
</feature>
<feature type="compositionally biased region" description="Polar residues" evidence="2">
    <location>
        <begin position="38"/>
        <end position="50"/>
    </location>
</feature>
<feature type="compositionally biased region" description="Basic and acidic residues" evidence="2">
    <location>
        <begin position="427"/>
        <end position="440"/>
    </location>
</feature>
<feature type="compositionally biased region" description="Gly residues" evidence="2">
    <location>
        <begin position="508"/>
        <end position="520"/>
    </location>
</feature>
<feature type="compositionally biased region" description="Basic and acidic residues" evidence="2">
    <location>
        <begin position="569"/>
        <end position="578"/>
    </location>
</feature>
<feature type="splice variant" id="VSP_044760" description="In isoform 2." evidence="3">
    <location>
        <begin position="104"/>
        <end position="262"/>
    </location>
</feature>
<feature type="splice variant" id="VSP_044761" description="In isoform 2." evidence="3">
    <original>EHLEAASQQNQQLTAQLSLMALPGEGHGGEHLDSEGEEAPRPMPSVPEDPESREAM</original>
    <variation>VKETETSTPSKKGWEAGSSLLGGEVPGQRQLPAWGLVTTAPRRAVLRLFLASCL</variation>
    <location>
        <begin position="401"/>
        <end position="456"/>
    </location>
</feature>
<feature type="splice variant" id="VSP_044762" description="In isoform 2." evidence="3">
    <location>
        <begin position="457"/>
        <end position="632"/>
    </location>
</feature>
<gene>
    <name type="primary">GOLGA8O</name>
</gene>
<keyword id="KW-0025">Alternative splicing</keyword>
<keyword id="KW-0175">Coiled coil</keyword>
<keyword id="KW-1185">Reference proteome</keyword>
<accession>A6NCC3</accession>
<accession>A6NHZ1</accession>
<accession>E7ENU5</accession>
<sequence length="632" mass="71536">MAEETQHNKLAAAKKKLKEYWQKNRPRVPAGVNRNRKTNGSIPETATSGGCQPPGDSATGFHREGPTSSATLKDLESPCQERAVVLDSTSVKISRLKNTIKSLKQQKKQVEHQLEEEKKANNERQKAERELEVQIQTLIIQKEELNTDLYHMERSLRYFEEESKDLAVRLQHSLQCKGELESALSAVIATEKKKANQLSSCSKAHTEWELEQSLQDQALLKAQLTQLKESFQQLQLERDECAEHIEGERARWHQRMSKMSQEICTLKKEKQQDMRRVEELERSLSKLKNQMAEPLPPEPPAVPSEVELQHLRKELERVAGELQSQVKNNQHISLLNRRQEERIREQEERLRKQEERLQEQHEKLRQLAKPQSVFEELNNENKSTLQLEQQVKELQEKLGEEHLEAASQQNQQLTAQLSLMALPGEGHGGEHLDSEGEEAPRPMPSVPEDPESREAMSSFMDHLKEKADLSELVKKQELRFIQYWQERCHQKIHHLLSEPGGRAKDAALGGGHHQAGAQGGDEGEAAGAAADGIAAYSNYNNGHRKFLAAAHNSADEPGPGAPAPQELGAADKHGDLREVTLTSSAQGEAREDPLLDKPTAQPIVQDHQEHPGLGSNCCVPLFCWAWLPRRRR</sequence>
<evidence type="ECO:0000255" key="1"/>
<evidence type="ECO:0000256" key="2">
    <source>
        <dbReference type="SAM" id="MobiDB-lite"/>
    </source>
</evidence>
<evidence type="ECO:0000305" key="3"/>
<reference key="1">
    <citation type="journal article" date="2006" name="Nature">
        <title>Analysis of the DNA sequence and duplication history of human chromosome 15.</title>
        <authorList>
            <person name="Zody M.C."/>
            <person name="Garber M."/>
            <person name="Sharpe T."/>
            <person name="Young S.K."/>
            <person name="Rowen L."/>
            <person name="O'Neill K."/>
            <person name="Whittaker C.A."/>
            <person name="Kamal M."/>
            <person name="Chang J.L."/>
            <person name="Cuomo C.A."/>
            <person name="Dewar K."/>
            <person name="FitzGerald M.G."/>
            <person name="Kodira C.D."/>
            <person name="Madan A."/>
            <person name="Qin S."/>
            <person name="Yang X."/>
            <person name="Abbasi N."/>
            <person name="Abouelleil A."/>
            <person name="Arachchi H.M."/>
            <person name="Baradarani L."/>
            <person name="Birditt B."/>
            <person name="Bloom S."/>
            <person name="Bloom T."/>
            <person name="Borowsky M.L."/>
            <person name="Burke J."/>
            <person name="Butler J."/>
            <person name="Cook A."/>
            <person name="DeArellano K."/>
            <person name="DeCaprio D."/>
            <person name="Dorris L. III"/>
            <person name="Dors M."/>
            <person name="Eichler E.E."/>
            <person name="Engels R."/>
            <person name="Fahey J."/>
            <person name="Fleetwood P."/>
            <person name="Friedman C."/>
            <person name="Gearin G."/>
            <person name="Hall J.L."/>
            <person name="Hensley G."/>
            <person name="Johnson E."/>
            <person name="Jones C."/>
            <person name="Kamat A."/>
            <person name="Kaur A."/>
            <person name="Locke D.P."/>
            <person name="Madan A."/>
            <person name="Munson G."/>
            <person name="Jaffe D.B."/>
            <person name="Lui A."/>
            <person name="Macdonald P."/>
            <person name="Mauceli E."/>
            <person name="Naylor J.W."/>
            <person name="Nesbitt R."/>
            <person name="Nicol R."/>
            <person name="O'Leary S.B."/>
            <person name="Ratcliffe A."/>
            <person name="Rounsley S."/>
            <person name="She X."/>
            <person name="Sneddon K.M.B."/>
            <person name="Stewart S."/>
            <person name="Sougnez C."/>
            <person name="Stone S.M."/>
            <person name="Topham K."/>
            <person name="Vincent D."/>
            <person name="Wang S."/>
            <person name="Zimmer A.R."/>
            <person name="Birren B.W."/>
            <person name="Hood L."/>
            <person name="Lander E.S."/>
            <person name="Nusbaum C."/>
        </authorList>
    </citation>
    <scope>NUCLEOTIDE SEQUENCE [LARGE SCALE GENOMIC DNA]</scope>
</reference>